<gene>
    <name type="primary">RBBP7</name>
    <name type="ORF">QtsA-20489</name>
</gene>
<accession>Q4R304</accession>
<comment type="function">
    <text evidence="1 2">Core histone-binding subunit that may target chromatin remodeling factors, histone acetyltransferases and histone deacetylases to their histone substrates in a manner that is regulated by nucleosomal DNA. Component of several complexes which regulate chromatin metabolism. These include the type B histone acetyltransferase (HAT) complex, which is required for chromatin assembly following DNA replication; the core histone deacetylase (HDAC) complex, which promotes histone deacetylation and consequent transcriptional repression; the nucleosome remodeling and histone deacetylase complex (the NuRD complex), which promotes transcriptional repression by histone deacetylation and nucleosome remodeling; and the PRC2/EED-EZH2 complex, which promotes repression of homeotic genes during development; and the NURF (nucleosome remodeling factor) complex (By similarity).</text>
</comment>
<comment type="subunit">
    <text evidence="1 2">Binds directly to helix 1 of the histone fold of histone H4, a region that is not accessible when H4 is in chromatin. Subunit of the type B histone acetyltransferase (HAT) complex, composed of RBBP7 and HAT1. Subunit of the core histone deacetylase (HDAC) complex, which is composed of HDAC1, HDAC2, RBBP4 and RBBP7. The core HDAC complex associates with SIN3A, ARID4B/SAP180, SAP18, SAP30, SAP130, SUDS3/SAP45 and possibly ARID4A/RBP1 and ING1 to form the SIN3 HDAC complex. Component of the nucleosome remodeling and deacetylase (NuRD) repressor complex, composed of core proteins MTA1, MTA2, MTA3, RBBP4, RBBP7, HDAC1, HDAC2, MBD2, MBD3, and peripherally associated proteins CDK2AP1, CDK2AP2, GATAD2A, GATAD2B, CHD3, CHD4 and CHD5. The exact stoichiometry of the NuRD complex is unknown, and some subunits such as MBD2 and MBD3, GATAD2A and GATAD2B, and CHD3, CHD4 and CHD5 define mutually exclusive NuRD complexes. The NuRD complex may interact with MBD3L1. The NuRD complex may interact with MBD3L2. Subunit of the PRC2/EED-EZH2 complex, which is composed of at least EED, EZH2, RBBP4, RBBP7 and SUZ12. The PRC2/EED-EZH2 complex may also associate with HDAC1. Component of the NURF-1 ISWI chromatin remodeling complex (also called the nucleosome-remodeling factor (NURF) complex) at least composed of SMARCA1, BPTF, RBBP4 and RBBP7. Within the complex interacts with SMARCA1. Component of the BPFT-SMARCA1 complex at least composed of SMARCA1, BPFT, RBBP4 and RBBP7; the complex is catalytically inactive and does not remodel chromatin. Within the complex interacts with SMARCA1. Interacts with BRCA1. Interacts with CDK2AP1 (By similarity). Interacts with CENPA. Interacts with CHD3. Interacts with CHD4. Interacts with CREBBP, and this interaction may be enhanced by the binding of phosphorylated CREB1 to CREBBP (By similarity). Interacts with HDAC7 (By similarity). Interacts with MTA1 (By similarity). Interacts with PWWP2B (By similarity). Interacts with RB1 (via viral protein-binding domain) (By similarity). Interacts with SUV39H1 (By similarity).</text>
</comment>
<comment type="subcellular location">
    <subcellularLocation>
        <location evidence="1">Nucleus</location>
    </subcellularLocation>
</comment>
<comment type="similarity">
    <text evidence="3">Belongs to the WD repeat RBAP46/RBAP48/MSI1 family.</text>
</comment>
<dbReference type="EMBL" id="AB179464">
    <property type="protein sequence ID" value="BAE02515.1"/>
    <property type="molecule type" value="mRNA"/>
</dbReference>
<dbReference type="RefSeq" id="NP_001272165.1">
    <property type="nucleotide sequence ID" value="NM_001285236.1"/>
</dbReference>
<dbReference type="RefSeq" id="XP_045239912.1">
    <property type="nucleotide sequence ID" value="XM_045383977.2"/>
</dbReference>
<dbReference type="SMR" id="Q4R304"/>
<dbReference type="STRING" id="9541.ENSMFAP00000036352"/>
<dbReference type="Ensembl" id="ENSMFAT00000073492.1">
    <property type="protein sequence ID" value="ENSMFAP00000053321.1"/>
    <property type="gene ID" value="ENSMFAG00000034492.2"/>
</dbReference>
<dbReference type="GeneID" id="101926122"/>
<dbReference type="VEuPathDB" id="HostDB:ENSMFAG00000034492"/>
<dbReference type="eggNOG" id="KOG0264">
    <property type="taxonomic scope" value="Eukaryota"/>
</dbReference>
<dbReference type="GeneTree" id="ENSGT00940000154748"/>
<dbReference type="OMA" id="KIRAMPA"/>
<dbReference type="Proteomes" id="UP000233100">
    <property type="component" value="Chromosome X"/>
</dbReference>
<dbReference type="Bgee" id="ENSMFAG00000034492">
    <property type="expression patterns" value="Expressed in heart and 13 other cell types or tissues"/>
</dbReference>
<dbReference type="GO" id="GO:0035098">
    <property type="term" value="C:ESC/E(Z) complex"/>
    <property type="evidence" value="ECO:0000250"/>
    <property type="project" value="UniProtKB"/>
</dbReference>
<dbReference type="GO" id="GO:0005634">
    <property type="term" value="C:nucleus"/>
    <property type="evidence" value="ECO:0000250"/>
    <property type="project" value="UniProtKB"/>
</dbReference>
<dbReference type="GO" id="GO:0016581">
    <property type="term" value="C:NuRD complex"/>
    <property type="evidence" value="ECO:0000250"/>
    <property type="project" value="UniProtKB"/>
</dbReference>
<dbReference type="GO" id="GO:0070370">
    <property type="term" value="P:cellular heat acclimation"/>
    <property type="evidence" value="ECO:0000250"/>
    <property type="project" value="UniProtKB"/>
</dbReference>
<dbReference type="GO" id="GO:0006325">
    <property type="term" value="P:chromatin organization"/>
    <property type="evidence" value="ECO:0007669"/>
    <property type="project" value="UniProtKB-KW"/>
</dbReference>
<dbReference type="GO" id="GO:0006260">
    <property type="term" value="P:DNA replication"/>
    <property type="evidence" value="ECO:0007669"/>
    <property type="project" value="UniProtKB-KW"/>
</dbReference>
<dbReference type="GO" id="GO:0030308">
    <property type="term" value="P:negative regulation of cell growth"/>
    <property type="evidence" value="ECO:0000250"/>
    <property type="project" value="UniProtKB"/>
</dbReference>
<dbReference type="FunFam" id="2.130.10.10:FF:000021">
    <property type="entry name" value="histone-binding protein RBBP4 isoform X1"/>
    <property type="match status" value="1"/>
</dbReference>
<dbReference type="Gene3D" id="2.130.10.10">
    <property type="entry name" value="YVTN repeat-like/Quinoprotein amine dehydrogenase"/>
    <property type="match status" value="1"/>
</dbReference>
<dbReference type="InterPro" id="IPR020472">
    <property type="entry name" value="G-protein_beta_WD-40_rep"/>
</dbReference>
<dbReference type="InterPro" id="IPR022052">
    <property type="entry name" value="Histone-bd_RBBP4-like_N"/>
</dbReference>
<dbReference type="InterPro" id="IPR015943">
    <property type="entry name" value="WD40/YVTN_repeat-like_dom_sf"/>
</dbReference>
<dbReference type="InterPro" id="IPR019775">
    <property type="entry name" value="WD40_repeat_CS"/>
</dbReference>
<dbReference type="InterPro" id="IPR036322">
    <property type="entry name" value="WD40_repeat_dom_sf"/>
</dbReference>
<dbReference type="InterPro" id="IPR001680">
    <property type="entry name" value="WD40_rpt"/>
</dbReference>
<dbReference type="InterPro" id="IPR050459">
    <property type="entry name" value="WD_repeat_RBAP46/RBAP48/MSI1"/>
</dbReference>
<dbReference type="PANTHER" id="PTHR22850">
    <property type="entry name" value="WD40 REPEAT FAMILY"/>
    <property type="match status" value="1"/>
</dbReference>
<dbReference type="Pfam" id="PF12265">
    <property type="entry name" value="CAF1C_H4-bd"/>
    <property type="match status" value="1"/>
</dbReference>
<dbReference type="Pfam" id="PF00400">
    <property type="entry name" value="WD40"/>
    <property type="match status" value="5"/>
</dbReference>
<dbReference type="PRINTS" id="PR00320">
    <property type="entry name" value="GPROTEINBRPT"/>
</dbReference>
<dbReference type="SMART" id="SM00320">
    <property type="entry name" value="WD40"/>
    <property type="match status" value="6"/>
</dbReference>
<dbReference type="SUPFAM" id="SSF50978">
    <property type="entry name" value="WD40 repeat-like"/>
    <property type="match status" value="1"/>
</dbReference>
<dbReference type="PROSITE" id="PS00678">
    <property type="entry name" value="WD_REPEATS_1"/>
    <property type="match status" value="3"/>
</dbReference>
<dbReference type="PROSITE" id="PS50082">
    <property type="entry name" value="WD_REPEATS_2"/>
    <property type="match status" value="5"/>
</dbReference>
<dbReference type="PROSITE" id="PS50294">
    <property type="entry name" value="WD_REPEATS_REGION"/>
    <property type="match status" value="1"/>
</dbReference>
<proteinExistence type="evidence at transcript level"/>
<protein>
    <recommendedName>
        <fullName>Histone-binding protein RBBP7</fullName>
    </recommendedName>
    <alternativeName>
        <fullName>Nucleosome-remodeling factor subunit RBAP46</fullName>
    </alternativeName>
    <alternativeName>
        <fullName>Retinoblastoma-binding protein 7</fullName>
        <shortName>RBBP-7</shortName>
    </alternativeName>
</protein>
<organism>
    <name type="scientific">Macaca fascicularis</name>
    <name type="common">Crab-eating macaque</name>
    <name type="synonym">Cynomolgus monkey</name>
    <dbReference type="NCBI Taxonomy" id="9541"/>
    <lineage>
        <taxon>Eukaryota</taxon>
        <taxon>Metazoa</taxon>
        <taxon>Chordata</taxon>
        <taxon>Craniata</taxon>
        <taxon>Vertebrata</taxon>
        <taxon>Euteleostomi</taxon>
        <taxon>Mammalia</taxon>
        <taxon>Eutheria</taxon>
        <taxon>Euarchontoglires</taxon>
        <taxon>Primates</taxon>
        <taxon>Haplorrhini</taxon>
        <taxon>Catarrhini</taxon>
        <taxon>Cercopithecidae</taxon>
        <taxon>Cercopithecinae</taxon>
        <taxon>Macaca</taxon>
    </lineage>
</organism>
<name>RBBP7_MACFA</name>
<sequence length="425" mass="47820">MASKEMFEDTVEERVINEEYKIWKKNTPFLYDLVMTHALQWPSLTVQWLPEVTKPEGKDYALHWLVLGTHTSDEQNHLVVARVHIPNDDAQFDASHCDSDKGEFGGFGSVTGKIECEIKINHEGEVNRARYMPQNPHIIATKTPSSDVLVFDYTKHPAKPDPSGECNPDLRLRGHQKEGYGLSWNSNLSGHLLSASDDHTVCLWDINAGPKEGKIVDAKAIFTGHSAVVEDVAWHLLHESLFGSVADDQKLMIWDTRSNTTSKPSHLVDAHTAEVNCLSFNPYSEFILATGSADKTVALWDLRNLKLKLHTFESHKDEIFQVHWSPHNETILASSGTDRRLNVWDLSKIGEEQSAEDAEDGPPELLFIHGGHTAKISDFSWNPNEPWVICSVSEDNIMQIWQMAENIYNDEESDVTTSELEGQGS</sequence>
<evidence type="ECO:0000250" key="1">
    <source>
        <dbReference type="UniProtKB" id="Q16576"/>
    </source>
</evidence>
<evidence type="ECO:0000250" key="2">
    <source>
        <dbReference type="UniProtKB" id="Q60973"/>
    </source>
</evidence>
<evidence type="ECO:0000305" key="3"/>
<keyword id="KW-0007">Acetylation</keyword>
<keyword id="KW-0143">Chaperone</keyword>
<keyword id="KW-0156">Chromatin regulator</keyword>
<keyword id="KW-0235">DNA replication</keyword>
<keyword id="KW-1017">Isopeptide bond</keyword>
<keyword id="KW-0539">Nucleus</keyword>
<keyword id="KW-0597">Phosphoprotein</keyword>
<keyword id="KW-1185">Reference proteome</keyword>
<keyword id="KW-0677">Repeat</keyword>
<keyword id="KW-0678">Repressor</keyword>
<keyword id="KW-0804">Transcription</keyword>
<keyword id="KW-0805">Transcription regulation</keyword>
<keyword id="KW-0832">Ubl conjugation</keyword>
<keyword id="KW-0853">WD repeat</keyword>
<feature type="initiator methionine" description="Removed" evidence="1">
    <location>
        <position position="1"/>
    </location>
</feature>
<feature type="chain" id="PRO_0000223243" description="Histone-binding protein RBBP7">
    <location>
        <begin position="2"/>
        <end position="425"/>
    </location>
</feature>
<feature type="repeat" description="WD 1">
    <location>
        <begin position="47"/>
        <end position="122"/>
    </location>
</feature>
<feature type="repeat" description="WD 2">
    <location>
        <begin position="128"/>
        <end position="173"/>
    </location>
</feature>
<feature type="repeat" description="WD 3">
    <location>
        <begin position="181"/>
        <end position="217"/>
    </location>
</feature>
<feature type="repeat" description="WD 4">
    <location>
        <begin position="228"/>
        <end position="269"/>
    </location>
</feature>
<feature type="repeat" description="WD 5">
    <location>
        <begin position="275"/>
        <end position="312"/>
    </location>
</feature>
<feature type="repeat" description="WD 6">
    <location>
        <begin position="318"/>
        <end position="369"/>
    </location>
</feature>
<feature type="repeat" description="WD 7">
    <location>
        <begin position="376"/>
        <end position="403"/>
    </location>
</feature>
<feature type="modified residue" description="N-acetylalanine" evidence="1">
    <location>
        <position position="2"/>
    </location>
</feature>
<feature type="modified residue" description="Phosphoserine" evidence="1">
    <location>
        <position position="3"/>
    </location>
</feature>
<feature type="modified residue" description="N6-acetyllysine; alternate" evidence="1">
    <location>
        <position position="4"/>
    </location>
</feature>
<feature type="modified residue" description="Phosphothreonine" evidence="1">
    <location>
        <position position="10"/>
    </location>
</feature>
<feature type="modified residue" description="Phosphoserine" evidence="1">
    <location>
        <position position="95"/>
    </location>
</feature>
<feature type="modified residue" description="N6-acetyllysine" evidence="2">
    <location>
        <position position="119"/>
    </location>
</feature>
<feature type="modified residue" description="N6-acetyllysine; alternate" evidence="2">
    <location>
        <position position="159"/>
    </location>
</feature>
<feature type="modified residue" description="Phosphoserine" evidence="1">
    <location>
        <position position="354"/>
    </location>
</feature>
<feature type="cross-link" description="Glycyl lysine isopeptide (Lys-Gly) (interchain with G-Cter in SUMO2); alternate" evidence="1">
    <location>
        <position position="4"/>
    </location>
</feature>
<feature type="cross-link" description="Glycyl lysine isopeptide (Lys-Gly) (interchain with G-Cter in ubiquitin); alternate" evidence="1">
    <location>
        <position position="4"/>
    </location>
</feature>
<feature type="cross-link" description="Glycyl lysine isopeptide (Lys-Gly) (interchain with G-Cter in SUMO2)" evidence="1">
    <location>
        <position position="101"/>
    </location>
</feature>
<feature type="cross-link" description="Glycyl lysine isopeptide (Lys-Gly) (interchain with G-Cter in SUMO2)" evidence="1">
    <location>
        <position position="155"/>
    </location>
</feature>
<feature type="cross-link" description="Glycyl lysine isopeptide (Lys-Gly) (interchain with G-Cter in SUMO2); alternate" evidence="1">
    <location>
        <position position="159"/>
    </location>
</feature>
<reference key="1">
    <citation type="submission" date="2005-06" db="EMBL/GenBank/DDBJ databases">
        <title>DNA sequences of macaque genes expressed in brain or testis and its evolutionary implications.</title>
        <authorList>
            <consortium name="International consortium for macaque cDNA sequencing and analysis"/>
        </authorList>
    </citation>
    <scope>NUCLEOTIDE SEQUENCE [LARGE SCALE MRNA]</scope>
    <source>
        <tissue>Testis</tissue>
    </source>
</reference>